<name>SSRP_MYCS2</name>
<organism>
    <name type="scientific">Mycolicibacterium smegmatis (strain ATCC 700084 / mc(2)155)</name>
    <name type="common">Mycobacterium smegmatis</name>
    <dbReference type="NCBI Taxonomy" id="246196"/>
    <lineage>
        <taxon>Bacteria</taxon>
        <taxon>Bacillati</taxon>
        <taxon>Actinomycetota</taxon>
        <taxon>Actinomycetes</taxon>
        <taxon>Mycobacteriales</taxon>
        <taxon>Mycobacteriaceae</taxon>
        <taxon>Mycolicibacterium</taxon>
    </lineage>
</organism>
<reference key="1">
    <citation type="submission" date="2006-10" db="EMBL/GenBank/DDBJ databases">
        <authorList>
            <person name="Fleischmann R.D."/>
            <person name="Dodson R.J."/>
            <person name="Haft D.H."/>
            <person name="Merkel J.S."/>
            <person name="Nelson W.C."/>
            <person name="Fraser C.M."/>
        </authorList>
    </citation>
    <scope>NUCLEOTIDE SEQUENCE [LARGE SCALE GENOMIC DNA]</scope>
    <source>
        <strain>ATCC 700084 / mc(2)155</strain>
    </source>
</reference>
<reference key="2">
    <citation type="journal article" date="2007" name="Genome Biol.">
        <title>Interrupted coding sequences in Mycobacterium smegmatis: authentic mutations or sequencing errors?</title>
        <authorList>
            <person name="Deshayes C."/>
            <person name="Perrodou E."/>
            <person name="Gallien S."/>
            <person name="Euphrasie D."/>
            <person name="Schaeffer C."/>
            <person name="Van-Dorsselaer A."/>
            <person name="Poch O."/>
            <person name="Lecompte O."/>
            <person name="Reyrat J.-M."/>
        </authorList>
    </citation>
    <scope>NUCLEOTIDE SEQUENCE [LARGE SCALE GENOMIC DNA]</scope>
    <source>
        <strain>ATCC 700084 / mc(2)155</strain>
    </source>
</reference>
<reference key="3">
    <citation type="journal article" date="2009" name="Genome Res.">
        <title>Ortho-proteogenomics: multiple proteomes investigation through orthology and a new MS-based protocol.</title>
        <authorList>
            <person name="Gallien S."/>
            <person name="Perrodou E."/>
            <person name="Carapito C."/>
            <person name="Deshayes C."/>
            <person name="Reyrat J.-M."/>
            <person name="Van Dorsselaer A."/>
            <person name="Poch O."/>
            <person name="Schaeffer C."/>
            <person name="Lecompte O."/>
        </authorList>
    </citation>
    <scope>NUCLEOTIDE SEQUENCE [LARGE SCALE GENOMIC DNA]</scope>
    <scope>IDENTIFICATION BY MASS SPECTROMETRY [LARGE SCALE ANALYSIS]</scope>
    <source>
        <strain>ATCC 700084 / mc(2)155</strain>
    </source>
</reference>
<protein>
    <recommendedName>
        <fullName evidence="1">SsrA-binding protein</fullName>
    </recommendedName>
    <alternativeName>
        <fullName evidence="1">Small protein B</fullName>
    </alternativeName>
</protein>
<dbReference type="EMBL" id="CP000480">
    <property type="protein sequence ID" value="ABK75588.1"/>
    <property type="molecule type" value="Genomic_DNA"/>
</dbReference>
<dbReference type="EMBL" id="CP001663">
    <property type="protein sequence ID" value="AFP38516.1"/>
    <property type="molecule type" value="Genomic_DNA"/>
</dbReference>
<dbReference type="RefSeq" id="WP_011728144.1">
    <property type="nucleotide sequence ID" value="NZ_SIJM01000021.1"/>
</dbReference>
<dbReference type="RefSeq" id="YP_886451.1">
    <property type="nucleotide sequence ID" value="NC_008596.1"/>
</dbReference>
<dbReference type="PDB" id="5ZEY">
    <property type="method" value="EM"/>
    <property type="resolution" value="12.50 A"/>
    <property type="chains" value="C=1-161"/>
</dbReference>
<dbReference type="PDBsum" id="5ZEY"/>
<dbReference type="EMDB" id="EMD-6925"/>
<dbReference type="SMR" id="A0QU63"/>
<dbReference type="STRING" id="246196.MSMEG_2091"/>
<dbReference type="PaxDb" id="246196-MSMEI_2045"/>
<dbReference type="GeneID" id="93456894"/>
<dbReference type="KEGG" id="msb:LJ00_10420"/>
<dbReference type="KEGG" id="msg:MSMEI_2045"/>
<dbReference type="KEGG" id="msm:MSMEG_2091"/>
<dbReference type="PATRIC" id="fig|246196.19.peg.2068"/>
<dbReference type="eggNOG" id="COG0691">
    <property type="taxonomic scope" value="Bacteria"/>
</dbReference>
<dbReference type="OrthoDB" id="9805462at2"/>
<dbReference type="Proteomes" id="UP000000757">
    <property type="component" value="Chromosome"/>
</dbReference>
<dbReference type="Proteomes" id="UP000006158">
    <property type="component" value="Chromosome"/>
</dbReference>
<dbReference type="GO" id="GO:0005829">
    <property type="term" value="C:cytosol"/>
    <property type="evidence" value="ECO:0007669"/>
    <property type="project" value="TreeGrafter"/>
</dbReference>
<dbReference type="GO" id="GO:0003723">
    <property type="term" value="F:RNA binding"/>
    <property type="evidence" value="ECO:0007669"/>
    <property type="project" value="UniProtKB-UniRule"/>
</dbReference>
<dbReference type="GO" id="GO:0070929">
    <property type="term" value="P:trans-translation"/>
    <property type="evidence" value="ECO:0007669"/>
    <property type="project" value="UniProtKB-UniRule"/>
</dbReference>
<dbReference type="CDD" id="cd09294">
    <property type="entry name" value="SmpB"/>
    <property type="match status" value="1"/>
</dbReference>
<dbReference type="Gene3D" id="2.40.280.10">
    <property type="match status" value="1"/>
</dbReference>
<dbReference type="HAMAP" id="MF_00023">
    <property type="entry name" value="SmpB"/>
    <property type="match status" value="1"/>
</dbReference>
<dbReference type="InterPro" id="IPR023620">
    <property type="entry name" value="SmpB"/>
</dbReference>
<dbReference type="InterPro" id="IPR000037">
    <property type="entry name" value="SsrA-bd_prot"/>
</dbReference>
<dbReference type="InterPro" id="IPR020081">
    <property type="entry name" value="SsrA-bd_prot_CS"/>
</dbReference>
<dbReference type="NCBIfam" id="NF003843">
    <property type="entry name" value="PRK05422.1"/>
    <property type="match status" value="1"/>
</dbReference>
<dbReference type="NCBIfam" id="TIGR00086">
    <property type="entry name" value="smpB"/>
    <property type="match status" value="1"/>
</dbReference>
<dbReference type="PANTHER" id="PTHR30308:SF2">
    <property type="entry name" value="SSRA-BINDING PROTEIN"/>
    <property type="match status" value="1"/>
</dbReference>
<dbReference type="PANTHER" id="PTHR30308">
    <property type="entry name" value="TMRNA-BINDING COMPONENT OF TRANS-TRANSLATION TAGGING COMPLEX"/>
    <property type="match status" value="1"/>
</dbReference>
<dbReference type="Pfam" id="PF01668">
    <property type="entry name" value="SmpB"/>
    <property type="match status" value="1"/>
</dbReference>
<dbReference type="SUPFAM" id="SSF74982">
    <property type="entry name" value="Small protein B (SmpB)"/>
    <property type="match status" value="1"/>
</dbReference>
<dbReference type="PROSITE" id="PS01317">
    <property type="entry name" value="SSRP"/>
    <property type="match status" value="1"/>
</dbReference>
<gene>
    <name evidence="1" type="primary">smpB</name>
    <name type="ordered locus">MSMEG_2091</name>
    <name type="ordered locus">MSMEI_2045</name>
</gene>
<feature type="chain" id="PRO_1000002086" description="SsrA-binding protein">
    <location>
        <begin position="1"/>
        <end position="161"/>
    </location>
</feature>
<sequence>MTKKSASSNNKVVATNRKARHNYTILDTYEAGIVLMGTEVKSLREGQASLADAFATVDDGEIWLRNVHIAEYHHGTWTNHAPRRNRKLLLHRKQIDNLIGKIRDGNLTLVPLSIYFTDGKVKVELALARGKQAHDKRQDLARRDAQREVIRELGRRAKGKI</sequence>
<evidence type="ECO:0000255" key="1">
    <source>
        <dbReference type="HAMAP-Rule" id="MF_00023"/>
    </source>
</evidence>
<comment type="function">
    <text evidence="1">Required for rescue of stalled ribosomes mediated by trans-translation. Binds to transfer-messenger RNA (tmRNA), required for stable association of tmRNA with ribosomes. tmRNA and SmpB together mimic tRNA shape, replacing the anticodon stem-loop with SmpB. tmRNA is encoded by the ssrA gene; the 2 termini fold to resemble tRNA(Ala) and it encodes a 'tag peptide', a short internal open reading frame. During trans-translation Ala-aminoacylated tmRNA acts like a tRNA, entering the A-site of stalled ribosomes, displacing the stalled mRNA. The ribosome then switches to translate the ORF on the tmRNA; the nascent peptide is terminated with the 'tag peptide' encoded by the tmRNA and targeted for degradation. The ribosome is freed to recommence translation, which seems to be the essential function of trans-translation.</text>
</comment>
<comment type="subcellular location">
    <subcellularLocation>
        <location evidence="1">Cytoplasm</location>
    </subcellularLocation>
    <text evidence="1">The tmRNA-SmpB complex associates with stalled 70S ribosomes.</text>
</comment>
<comment type="similarity">
    <text evidence="1">Belongs to the SmpB family.</text>
</comment>
<proteinExistence type="evidence at protein level"/>
<accession>A0QU63</accession>
<accession>I7G5P6</accession>
<keyword id="KW-0002">3D-structure</keyword>
<keyword id="KW-0963">Cytoplasm</keyword>
<keyword id="KW-1185">Reference proteome</keyword>
<keyword id="KW-0694">RNA-binding</keyword>